<organismHost>
    <name type="scientific">Acanthamoeba polyphaga</name>
    <name type="common">Amoeba</name>
    <dbReference type="NCBI Taxonomy" id="5757"/>
</organismHost>
<reference key="1">
    <citation type="journal article" date="2004" name="Science">
        <title>The 1.2-megabase genome sequence of Mimivirus.</title>
        <authorList>
            <person name="Raoult D."/>
            <person name="Audic S."/>
            <person name="Robert C."/>
            <person name="Abergel C."/>
            <person name="Renesto P."/>
            <person name="Ogata H."/>
            <person name="La Scola B."/>
            <person name="Susan M."/>
            <person name="Claverie J.-M."/>
        </authorList>
    </citation>
    <scope>NUCLEOTIDE SEQUENCE [LARGE SCALE GENOMIC DNA]</scope>
    <source>
        <strain>Rowbotham-Bradford</strain>
    </source>
</reference>
<gene>
    <name type="ordered locus">MIMI_L772</name>
</gene>
<accession>Q5UPR8</accession>
<name>YL772_MIMIV</name>
<dbReference type="EMBL" id="AY653733">
    <property type="protein sequence ID" value="AAV51032.1"/>
    <property type="molecule type" value="Genomic_DNA"/>
</dbReference>
<dbReference type="SMR" id="Q5UPR8"/>
<dbReference type="KEGG" id="vg:9925431"/>
<dbReference type="Proteomes" id="UP000001134">
    <property type="component" value="Genome"/>
</dbReference>
<dbReference type="SUPFAM" id="SSF140860">
    <property type="entry name" value="Pseudo ankyrin repeat-like"/>
    <property type="match status" value="1"/>
</dbReference>
<proteinExistence type="predicted"/>
<organism>
    <name type="scientific">Acanthamoeba polyphaga mimivirus</name>
    <name type="common">APMV</name>
    <dbReference type="NCBI Taxonomy" id="212035"/>
    <lineage>
        <taxon>Viruses</taxon>
        <taxon>Varidnaviria</taxon>
        <taxon>Bamfordvirae</taxon>
        <taxon>Nucleocytoviricota</taxon>
        <taxon>Megaviricetes</taxon>
        <taxon>Imitervirales</taxon>
        <taxon>Mimiviridae</taxon>
        <taxon>Megamimivirinae</taxon>
        <taxon>Mimivirus</taxon>
        <taxon>Mimivirus bradfordmassiliense</taxon>
    </lineage>
</organism>
<feature type="chain" id="PRO_0000250634" description="Uncharacterized protein L772">
    <location>
        <begin position="1"/>
        <end position="295"/>
    </location>
</feature>
<sequence>MYYHIDSKSEIDCNDYLFFTDVTKVFSSTTYFANSYLFECLPNESDPEFKITKKSGGHIMKRFVINNKYPLDNVSTIEFLLDNGSLGVNFIVEWAFSKSNIDILRFFQERNITIPFEPKYSHATGELFKSKSVTIKYKHSSLLCNVRSTNKYQLIPREINYENLDVHRYVIDNYEYFGTYLYAYFFYESWIGKNELSLYILQTIKIDVDLILKDVIRVANITYIEMLVGYGAIINNDIFESAFKYQDVALVKYLIENYDIDYDLDKLIVESKNIEILQYLLSLGNKTISEYWEVY</sequence>
<keyword id="KW-1185">Reference proteome</keyword>
<protein>
    <recommendedName>
        <fullName>Uncharacterized protein L772</fullName>
    </recommendedName>
</protein>